<sequence>MELMARFLERYLHFAPTNTEPPGTLIWFLGHSYKIEDSQWPEKFLYDSFSLITITYRSGIEGLENMTSDTGWGCMIRSTQTLLANCLRICYPEKQLKEILALFADEPSAPFSIHQFVTMGKTLCDINPGQWFGPTTSCSCVARLSDQNPDVPLHVYVARNGNAIYRDQLSKVSFPVLLLIPTRLGIDSINESYYDQLLQVFEIRSFVGITGGRPRSAHYFYARQNQYFFYLDPHCTHFAHTTTQPASEETFHSATLRRVAIQDLDPCMIFGFLIRDEEEWHSFEANQKYFADIVQIFDSEPQPVETHDDFVLDENVEDHL</sequence>
<organism>
    <name type="scientific">Schizosaccharomyces pombe (strain 972 / ATCC 24843)</name>
    <name type="common">Fission yeast</name>
    <dbReference type="NCBI Taxonomy" id="284812"/>
    <lineage>
        <taxon>Eukaryota</taxon>
        <taxon>Fungi</taxon>
        <taxon>Dikarya</taxon>
        <taxon>Ascomycota</taxon>
        <taxon>Taphrinomycotina</taxon>
        <taxon>Schizosaccharomycetes</taxon>
        <taxon>Schizosaccharomycetales</taxon>
        <taxon>Schizosaccharomycetaceae</taxon>
        <taxon>Schizosaccharomyces</taxon>
    </lineage>
</organism>
<dbReference type="EC" id="3.4.22.-"/>
<dbReference type="EMBL" id="CU329670">
    <property type="protein sequence ID" value="CAC00556.1"/>
    <property type="molecule type" value="Genomic_DNA"/>
</dbReference>
<dbReference type="RefSeq" id="NP_594771.1">
    <property type="nucleotide sequence ID" value="NM_001020198.2"/>
</dbReference>
<dbReference type="SMR" id="Q9P373"/>
<dbReference type="BioGRID" id="278657">
    <property type="interactions" value="15"/>
</dbReference>
<dbReference type="FunCoup" id="Q9P373">
    <property type="interactions" value="154"/>
</dbReference>
<dbReference type="STRING" id="284812.Q9P373"/>
<dbReference type="MEROPS" id="C54.A07"/>
<dbReference type="PaxDb" id="4896-SPAC19B12.08.1"/>
<dbReference type="EnsemblFungi" id="SPAC19B12.08.1">
    <property type="protein sequence ID" value="SPAC19B12.08.1:pep"/>
    <property type="gene ID" value="SPAC19B12.08"/>
</dbReference>
<dbReference type="GeneID" id="2542182"/>
<dbReference type="KEGG" id="spo:2542182"/>
<dbReference type="PomBase" id="SPAC19B12.08">
    <property type="gene designation" value="atg4"/>
</dbReference>
<dbReference type="VEuPathDB" id="FungiDB:SPAC19B12.08"/>
<dbReference type="eggNOG" id="KOG2674">
    <property type="taxonomic scope" value="Eukaryota"/>
</dbReference>
<dbReference type="HOGENOM" id="CLU_021259_5_2_1"/>
<dbReference type="InParanoid" id="Q9P373"/>
<dbReference type="OMA" id="CMIRSTQ"/>
<dbReference type="PhylomeDB" id="Q9P373"/>
<dbReference type="PRO" id="PR:Q9P373"/>
<dbReference type="Proteomes" id="UP000002485">
    <property type="component" value="Chromosome I"/>
</dbReference>
<dbReference type="GO" id="GO:0005737">
    <property type="term" value="C:cytoplasm"/>
    <property type="evidence" value="ECO:0000318"/>
    <property type="project" value="GO_Central"/>
</dbReference>
<dbReference type="GO" id="GO:0005829">
    <property type="term" value="C:cytosol"/>
    <property type="evidence" value="ECO:0007005"/>
    <property type="project" value="PomBase"/>
</dbReference>
<dbReference type="GO" id="GO:0005634">
    <property type="term" value="C:nucleus"/>
    <property type="evidence" value="ECO:0007005"/>
    <property type="project" value="PomBase"/>
</dbReference>
<dbReference type="GO" id="GO:0000407">
    <property type="term" value="C:phagophore assembly site"/>
    <property type="evidence" value="ECO:0000305"/>
    <property type="project" value="PomBase"/>
</dbReference>
<dbReference type="GO" id="GO:0004197">
    <property type="term" value="F:cysteine-type endopeptidase activity"/>
    <property type="evidence" value="ECO:0000266"/>
    <property type="project" value="PomBase"/>
</dbReference>
<dbReference type="GO" id="GO:0019786">
    <property type="term" value="F:protein-phosphatidylethanolamide deconjugating activity"/>
    <property type="evidence" value="ECO:0000318"/>
    <property type="project" value="GO_Central"/>
</dbReference>
<dbReference type="GO" id="GO:0035973">
    <property type="term" value="P:aggrephagy"/>
    <property type="evidence" value="ECO:0000318"/>
    <property type="project" value="GO_Central"/>
</dbReference>
<dbReference type="GO" id="GO:0000045">
    <property type="term" value="P:autophagosome assembly"/>
    <property type="evidence" value="ECO:0000318"/>
    <property type="project" value="GO_Central"/>
</dbReference>
<dbReference type="GO" id="GO:0016236">
    <property type="term" value="P:macroautophagy"/>
    <property type="evidence" value="ECO:0000315"/>
    <property type="project" value="PomBase"/>
</dbReference>
<dbReference type="GO" id="GO:0000423">
    <property type="term" value="P:mitophagy"/>
    <property type="evidence" value="ECO:0000318"/>
    <property type="project" value="GO_Central"/>
</dbReference>
<dbReference type="GO" id="GO:0034727">
    <property type="term" value="P:piecemeal microautophagy of the nucleus"/>
    <property type="evidence" value="ECO:0000318"/>
    <property type="project" value="GO_Central"/>
</dbReference>
<dbReference type="GO" id="GO:0016485">
    <property type="term" value="P:protein processing"/>
    <property type="evidence" value="ECO:0000318"/>
    <property type="project" value="GO_Central"/>
</dbReference>
<dbReference type="GO" id="GO:0015031">
    <property type="term" value="P:protein transport"/>
    <property type="evidence" value="ECO:0007669"/>
    <property type="project" value="UniProtKB-KW"/>
</dbReference>
<dbReference type="InterPro" id="IPR038765">
    <property type="entry name" value="Papain-like_cys_pep_sf"/>
</dbReference>
<dbReference type="InterPro" id="IPR005078">
    <property type="entry name" value="Peptidase_C54"/>
</dbReference>
<dbReference type="InterPro" id="IPR046792">
    <property type="entry name" value="Peptidase_C54_cat"/>
</dbReference>
<dbReference type="PANTHER" id="PTHR22624:SF49">
    <property type="entry name" value="CYSTEINE PROTEASE"/>
    <property type="match status" value="1"/>
</dbReference>
<dbReference type="PANTHER" id="PTHR22624">
    <property type="entry name" value="CYSTEINE PROTEASE ATG4"/>
    <property type="match status" value="1"/>
</dbReference>
<dbReference type="Pfam" id="PF03416">
    <property type="entry name" value="Peptidase_C54"/>
    <property type="match status" value="1"/>
</dbReference>
<dbReference type="SUPFAM" id="SSF54001">
    <property type="entry name" value="Cysteine proteinases"/>
    <property type="match status" value="1"/>
</dbReference>
<protein>
    <recommendedName>
        <fullName>Probable cysteine protease atg4</fullName>
        <ecNumber>3.4.22.-</ecNumber>
    </recommendedName>
    <alternativeName>
        <fullName>Autophagy-related protein 4</fullName>
    </alternativeName>
</protein>
<accession>Q9P373</accession>
<keyword id="KW-0072">Autophagy</keyword>
<keyword id="KW-0963">Cytoplasm</keyword>
<keyword id="KW-0378">Hydrolase</keyword>
<keyword id="KW-0539">Nucleus</keyword>
<keyword id="KW-0645">Protease</keyword>
<keyword id="KW-0653">Protein transport</keyword>
<keyword id="KW-1185">Reference proteome</keyword>
<keyword id="KW-0788">Thiol protease</keyword>
<keyword id="KW-0813">Transport</keyword>
<keyword id="KW-0833">Ubl conjugation pathway</keyword>
<gene>
    <name type="primary">atg4</name>
    <name type="ORF">SPAC19B12.08</name>
</gene>
<comment type="function">
    <text evidence="1 4 5">Cysteine protease that plays a key role in cytoplasm to vacuole transport (Cvt) and autophagy by mediating both proteolytic activation and delipidation of atg8 (PubMed:23950735). Required for selective autophagic degradation of the nucleus (nucleophagy) as well as for mitophagy which contributes to regulate mitochondrial quantity and quality by eliminating the mitochondria to a basal level to fulfill cellular energy requirements and preventing excess ROS production (By similarity). The protease activity is required for proteolytic activation of atg8: cleaves the C-terminal amino acid of atg8 to reveal a C-terminal glycine (PubMed:23950735). Atg8 ubiquitin-like activity requires the exposure of the glycine at the C-terminus for its conjugation to phosphatidylethanolamine (PE) and its insertion to membranes, which is necessary for autophagy. The atg8-PE conjugate mediates tethering between adjacent membranes and stimulates membrane hemifusion, leading to expansion of the autophagosomal membrane during autophagy. In addition to the protease activity, also catalyzes deconjugation of PE-conjugated forms of atg8 during macroautophagy: atg8 delipidation is required to release the protein from membranes, which facilitates multiple events during macroautophagy, and especially for efficient autophagosome biogenesis, the assembly of atg9-containing tubulovesicular clusters into phagophores/autophagosomes, and for the disassembly of PAS-associated ATG components. Atg8 delipidation by atg4 also recycles atg8-PE generated on inappropriate membranes to maintain a reservoir of unlipidated atg8 that is required for autophagosome formation at the PAS (By similarity). Plays a role in meiosis and sporulation (PubMed:19778961).</text>
</comment>
<comment type="catalytic activity">
    <reaction evidence="1">
        <text>[protein]-C-terminal L-amino acid-glycyl-phosphatidylethanolamide + H2O = [protein]-C-terminal L-amino acid-glycine + a 1,2-diacyl-sn-glycero-3-phosphoethanolamine</text>
        <dbReference type="Rhea" id="RHEA:67548"/>
        <dbReference type="Rhea" id="RHEA-COMP:17323"/>
        <dbReference type="Rhea" id="RHEA-COMP:17324"/>
        <dbReference type="ChEBI" id="CHEBI:15377"/>
        <dbReference type="ChEBI" id="CHEBI:64612"/>
        <dbReference type="ChEBI" id="CHEBI:172940"/>
        <dbReference type="ChEBI" id="CHEBI:172941"/>
    </reaction>
    <physiologicalReaction direction="left-to-right" evidence="1">
        <dbReference type="Rhea" id="RHEA:67549"/>
    </physiologicalReaction>
</comment>
<comment type="subcellular location">
    <subcellularLocation>
        <location evidence="3">Cytoplasm</location>
    </subcellularLocation>
    <subcellularLocation>
        <location evidence="3">Nucleus</location>
    </subcellularLocation>
    <subcellularLocation>
        <location evidence="1">Preautophagosomal structure</location>
    </subcellularLocation>
</comment>
<comment type="disruption phenotype">
    <text evidence="5">Impairs atg8-processing.</text>
</comment>
<comment type="similarity">
    <text evidence="6">Belongs to the peptidase C54 family.</text>
</comment>
<reference key="1">
    <citation type="journal article" date="2002" name="Nature">
        <title>The genome sequence of Schizosaccharomyces pombe.</title>
        <authorList>
            <person name="Wood V."/>
            <person name="Gwilliam R."/>
            <person name="Rajandream M.A."/>
            <person name="Lyne M.H."/>
            <person name="Lyne R."/>
            <person name="Stewart A."/>
            <person name="Sgouros J.G."/>
            <person name="Peat N."/>
            <person name="Hayles J."/>
            <person name="Baker S.G."/>
            <person name="Basham D."/>
            <person name="Bowman S."/>
            <person name="Brooks K."/>
            <person name="Brown D."/>
            <person name="Brown S."/>
            <person name="Chillingworth T."/>
            <person name="Churcher C.M."/>
            <person name="Collins M."/>
            <person name="Connor R."/>
            <person name="Cronin A."/>
            <person name="Davis P."/>
            <person name="Feltwell T."/>
            <person name="Fraser A."/>
            <person name="Gentles S."/>
            <person name="Goble A."/>
            <person name="Hamlin N."/>
            <person name="Harris D.E."/>
            <person name="Hidalgo J."/>
            <person name="Hodgson G."/>
            <person name="Holroyd S."/>
            <person name="Hornsby T."/>
            <person name="Howarth S."/>
            <person name="Huckle E.J."/>
            <person name="Hunt S."/>
            <person name="Jagels K."/>
            <person name="James K.D."/>
            <person name="Jones L."/>
            <person name="Jones M."/>
            <person name="Leather S."/>
            <person name="McDonald S."/>
            <person name="McLean J."/>
            <person name="Mooney P."/>
            <person name="Moule S."/>
            <person name="Mungall K.L."/>
            <person name="Murphy L.D."/>
            <person name="Niblett D."/>
            <person name="Odell C."/>
            <person name="Oliver K."/>
            <person name="O'Neil S."/>
            <person name="Pearson D."/>
            <person name="Quail M.A."/>
            <person name="Rabbinowitsch E."/>
            <person name="Rutherford K.M."/>
            <person name="Rutter S."/>
            <person name="Saunders D."/>
            <person name="Seeger K."/>
            <person name="Sharp S."/>
            <person name="Skelton J."/>
            <person name="Simmonds M.N."/>
            <person name="Squares R."/>
            <person name="Squares S."/>
            <person name="Stevens K."/>
            <person name="Taylor K."/>
            <person name="Taylor R.G."/>
            <person name="Tivey A."/>
            <person name="Walsh S.V."/>
            <person name="Warren T."/>
            <person name="Whitehead S."/>
            <person name="Woodward J.R."/>
            <person name="Volckaert G."/>
            <person name="Aert R."/>
            <person name="Robben J."/>
            <person name="Grymonprez B."/>
            <person name="Weltjens I."/>
            <person name="Vanstreels E."/>
            <person name="Rieger M."/>
            <person name="Schaefer M."/>
            <person name="Mueller-Auer S."/>
            <person name="Gabel C."/>
            <person name="Fuchs M."/>
            <person name="Duesterhoeft A."/>
            <person name="Fritzc C."/>
            <person name="Holzer E."/>
            <person name="Moestl D."/>
            <person name="Hilbert H."/>
            <person name="Borzym K."/>
            <person name="Langer I."/>
            <person name="Beck A."/>
            <person name="Lehrach H."/>
            <person name="Reinhardt R."/>
            <person name="Pohl T.M."/>
            <person name="Eger P."/>
            <person name="Zimmermann W."/>
            <person name="Wedler H."/>
            <person name="Wambutt R."/>
            <person name="Purnelle B."/>
            <person name="Goffeau A."/>
            <person name="Cadieu E."/>
            <person name="Dreano S."/>
            <person name="Gloux S."/>
            <person name="Lelaure V."/>
            <person name="Mottier S."/>
            <person name="Galibert F."/>
            <person name="Aves S.J."/>
            <person name="Xiang Z."/>
            <person name="Hunt C."/>
            <person name="Moore K."/>
            <person name="Hurst S.M."/>
            <person name="Lucas M."/>
            <person name="Rochet M."/>
            <person name="Gaillardin C."/>
            <person name="Tallada V.A."/>
            <person name="Garzon A."/>
            <person name="Thode G."/>
            <person name="Daga R.R."/>
            <person name="Cruzado L."/>
            <person name="Jimenez J."/>
            <person name="Sanchez M."/>
            <person name="del Rey F."/>
            <person name="Benito J."/>
            <person name="Dominguez A."/>
            <person name="Revuelta J.L."/>
            <person name="Moreno S."/>
            <person name="Armstrong J."/>
            <person name="Forsburg S.L."/>
            <person name="Cerutti L."/>
            <person name="Lowe T."/>
            <person name="McCombie W.R."/>
            <person name="Paulsen I."/>
            <person name="Potashkin J."/>
            <person name="Shpakovski G.V."/>
            <person name="Ussery D."/>
            <person name="Barrell B.G."/>
            <person name="Nurse P."/>
        </authorList>
    </citation>
    <scope>NUCLEOTIDE SEQUENCE [LARGE SCALE GENOMIC DNA]</scope>
    <source>
        <strain>972 / ATCC 24843</strain>
    </source>
</reference>
<reference key="2">
    <citation type="journal article" date="2006" name="Nat. Biotechnol.">
        <title>ORFeome cloning and global analysis of protein localization in the fission yeast Schizosaccharomyces pombe.</title>
        <authorList>
            <person name="Matsuyama A."/>
            <person name="Arai R."/>
            <person name="Yashiroda Y."/>
            <person name="Shirai A."/>
            <person name="Kamata A."/>
            <person name="Sekido S."/>
            <person name="Kobayashi Y."/>
            <person name="Hashimoto A."/>
            <person name="Hamamoto M."/>
            <person name="Hiraoka Y."/>
            <person name="Horinouchi S."/>
            <person name="Yoshida M."/>
        </authorList>
    </citation>
    <scope>SUBCELLULAR LOCATION [LARGE SCALE ANALYSIS]</scope>
</reference>
<reference key="3">
    <citation type="journal article" date="2009" name="Microbiology">
        <title>Autophagy-deficient Schizosaccharomyces pombe mutants undergo partial sporulation during nitrogen starvation.</title>
        <authorList>
            <person name="Mukaiyama H."/>
            <person name="Kajiwara S."/>
            <person name="Hosomi A."/>
            <person name="Giga-Hama Y."/>
            <person name="Tanaka N."/>
            <person name="Nakamura T."/>
            <person name="Takegawa K."/>
        </authorList>
    </citation>
    <scope>FUNCTION</scope>
</reference>
<reference key="4">
    <citation type="journal article" date="2013" name="PLoS Genet.">
        <title>Global analysis of fission yeast mating genes reveals new autophagy factors.</title>
        <authorList>
            <person name="Sun L.L."/>
            <person name="Li M."/>
            <person name="Suo F."/>
            <person name="Liu X.M."/>
            <person name="Shen E.Z."/>
            <person name="Yang B."/>
            <person name="Dong M.Q."/>
            <person name="He W.Z."/>
            <person name="Du L.L."/>
        </authorList>
    </citation>
    <scope>FUNCTION</scope>
    <scope>DISRUPTION PHENOTYPE</scope>
</reference>
<proteinExistence type="inferred from homology"/>
<name>ATG4_SCHPO</name>
<feature type="chain" id="PRO_0000215868" description="Probable cysteine protease atg4">
    <location>
        <begin position="1"/>
        <end position="320"/>
    </location>
</feature>
<feature type="active site" description="Nucleophile" evidence="2">
    <location>
        <position position="74"/>
    </location>
</feature>
<feature type="active site" evidence="2">
    <location>
        <position position="232"/>
    </location>
</feature>
<feature type="active site" evidence="2">
    <location>
        <position position="234"/>
    </location>
</feature>
<evidence type="ECO:0000250" key="1">
    <source>
        <dbReference type="UniProtKB" id="P53867"/>
    </source>
</evidence>
<evidence type="ECO:0000250" key="2">
    <source>
        <dbReference type="UniProtKB" id="Q9Y4P1"/>
    </source>
</evidence>
<evidence type="ECO:0000269" key="3">
    <source>
    </source>
</evidence>
<evidence type="ECO:0000269" key="4">
    <source>
    </source>
</evidence>
<evidence type="ECO:0000269" key="5">
    <source>
    </source>
</evidence>
<evidence type="ECO:0000305" key="6"/>